<comment type="function">
    <text evidence="4 5 8">Expressed at the plasma membrane of B cells, it is the ligand of the CD27 receptor which is specifically expressed at the surface of T cells (PubMed:28011863, PubMed:28011864, PubMed:8387892). The CD70-CD27 signaling pathway mediates antigen-specific T cell activation and expansion which in turn provides immune surveillance of B cells (PubMed:28011863, PubMed:28011864).</text>
</comment>
<comment type="subunit">
    <text evidence="6">Homotrimer.</text>
</comment>
<comment type="interaction">
    <interactant intactId="EBI-18539709">
        <id>P32970</id>
    </interactant>
    <interactant intactId="EBI-18535450">
        <id>Q9GZR5</id>
        <label>ELOVL4</label>
    </interactant>
    <organismsDiffer>false</organismsDiffer>
    <experiments>3</experiments>
</comment>
<comment type="subcellular location">
    <subcellularLocation>
        <location evidence="3 4 5 7 8">Cell membrane</location>
        <topology evidence="1">Single-pass type II membrane protein</topology>
    </subcellularLocation>
</comment>
<comment type="alternative products">
    <event type="alternative splicing"/>
    <isoform>
        <id>P32970-1</id>
        <name>1</name>
        <sequence type="displayed"/>
    </isoform>
    <isoform>
        <id>P32970-2</id>
        <name>2</name>
        <sequence type="described" ref="VSP_056416"/>
    </isoform>
</comment>
<comment type="PTM">
    <text evidence="6">N-glycosylated.</text>
</comment>
<comment type="disease" evidence="4 5">
    <disease id="DI-05443">
        <name>Lymphoproliferative syndrome 3</name>
        <acronym>LPFS3</acronym>
        <description>An autosomal recessive, early-onset immunologic disorder characterized by increased susceptibility to Epstein-Barr virus infection in B cells, abnormal B-cell proliferation and increased susceptibility to B-cell malignancies, including Hodgkin lymphoma. Patients usually have lymphadenopathy and hypogammaglobulinemia, and may suffer from recurrent infections.</description>
        <dbReference type="MIM" id="618261"/>
    </disease>
    <text>The disease is caused by variants affecting the gene represented in this entry.</text>
</comment>
<comment type="similarity">
    <text evidence="12">Belongs to the tumor necrosis factor family.</text>
</comment>
<evidence type="ECO:0000255" key="1"/>
<evidence type="ECO:0000255" key="2">
    <source>
        <dbReference type="PROSITE-ProRule" id="PRU01387"/>
    </source>
</evidence>
<evidence type="ECO:0000269" key="3">
    <source>
    </source>
</evidence>
<evidence type="ECO:0000269" key="4">
    <source>
    </source>
</evidence>
<evidence type="ECO:0000269" key="5">
    <source>
    </source>
</evidence>
<evidence type="ECO:0000269" key="6">
    <source>
    </source>
</evidence>
<evidence type="ECO:0000269" key="7">
    <source>
    </source>
</evidence>
<evidence type="ECO:0000269" key="8">
    <source>
    </source>
</evidence>
<evidence type="ECO:0000303" key="9">
    <source>
    </source>
</evidence>
<evidence type="ECO:0000303" key="10">
    <source>
    </source>
</evidence>
<evidence type="ECO:0000303" key="11">
    <source>
    </source>
</evidence>
<evidence type="ECO:0000305" key="12"/>
<evidence type="ECO:0000305" key="13">
    <source>
    </source>
</evidence>
<evidence type="ECO:0000312" key="14">
    <source>
        <dbReference type="HGNC" id="HGNC:11937"/>
    </source>
</evidence>
<evidence type="ECO:0007744" key="15">
    <source>
        <dbReference type="PDB" id="7KX0"/>
    </source>
</evidence>
<evidence type="ECO:0007829" key="16">
    <source>
        <dbReference type="PDB" id="7KX0"/>
    </source>
</evidence>
<organism>
    <name type="scientific">Homo sapiens</name>
    <name type="common">Human</name>
    <dbReference type="NCBI Taxonomy" id="9606"/>
    <lineage>
        <taxon>Eukaryota</taxon>
        <taxon>Metazoa</taxon>
        <taxon>Chordata</taxon>
        <taxon>Craniata</taxon>
        <taxon>Vertebrata</taxon>
        <taxon>Euteleostomi</taxon>
        <taxon>Mammalia</taxon>
        <taxon>Eutheria</taxon>
        <taxon>Euarchontoglires</taxon>
        <taxon>Primates</taxon>
        <taxon>Haplorrhini</taxon>
        <taxon>Catarrhini</taxon>
        <taxon>Hominidae</taxon>
        <taxon>Homo</taxon>
    </lineage>
</organism>
<gene>
    <name evidence="14" type="primary">CD70</name>
    <name evidence="11" type="synonym">CD27L</name>
    <name evidence="14" type="synonym">CD27LG</name>
    <name evidence="14" type="synonym">TNFSF7</name>
</gene>
<accession>P32970</accession>
<accession>B4DPR8</accession>
<accession>Q53XX4</accession>
<accession>Q96J57</accession>
<protein>
    <recommendedName>
        <fullName evidence="13">CD70 antigen</fullName>
    </recommendedName>
    <alternativeName>
        <fullName evidence="11">CD27 ligand</fullName>
        <shortName evidence="11">CD27-L</shortName>
    </alternativeName>
    <alternativeName>
        <fullName evidence="14">Tumor necrosis factor ligand superfamily member 7</fullName>
    </alternativeName>
    <cdAntigenName evidence="10">CD70</cdAntigenName>
</protein>
<keyword id="KW-0002">3D-structure</keyword>
<keyword id="KW-0025">Alternative splicing</keyword>
<keyword id="KW-1003">Cell membrane</keyword>
<keyword id="KW-0225">Disease variant</keyword>
<keyword id="KW-1015">Disulfide bond</keyword>
<keyword id="KW-0325">Glycoprotein</keyword>
<keyword id="KW-0472">Membrane</keyword>
<keyword id="KW-1267">Proteomics identification</keyword>
<keyword id="KW-1185">Reference proteome</keyword>
<keyword id="KW-0735">Signal-anchor</keyword>
<keyword id="KW-0812">Transmembrane</keyword>
<keyword id="KW-1133">Transmembrane helix</keyword>
<dbReference type="EMBL" id="L08096">
    <property type="protein sequence ID" value="AAA36175.1"/>
    <property type="molecule type" value="mRNA"/>
</dbReference>
<dbReference type="EMBL" id="S69339">
    <property type="protein sequence ID" value="AAB30121.1"/>
    <property type="molecule type" value="mRNA"/>
</dbReference>
<dbReference type="EMBL" id="BT007211">
    <property type="protein sequence ID" value="AAP35875.1"/>
    <property type="molecule type" value="mRNA"/>
</dbReference>
<dbReference type="EMBL" id="AK298467">
    <property type="protein sequence ID" value="BAG60680.1"/>
    <property type="molecule type" value="mRNA"/>
</dbReference>
<dbReference type="EMBL" id="EF064709">
    <property type="protein sequence ID" value="ABK41892.1"/>
    <property type="molecule type" value="Genomic_DNA"/>
</dbReference>
<dbReference type="EMBL" id="AC008760">
    <property type="status" value="NOT_ANNOTATED_CDS"/>
    <property type="molecule type" value="Genomic_DNA"/>
</dbReference>
<dbReference type="EMBL" id="CH471139">
    <property type="protein sequence ID" value="EAW69074.1"/>
    <property type="molecule type" value="Genomic_DNA"/>
</dbReference>
<dbReference type="EMBL" id="BC000725">
    <property type="protein sequence ID" value="AAH00725.1"/>
    <property type="molecule type" value="mRNA"/>
</dbReference>
<dbReference type="CCDS" id="CCDS12170.1">
    <molecule id="P32970-1"/>
</dbReference>
<dbReference type="CCDS" id="CCDS82283.1">
    <molecule id="P32970-2"/>
</dbReference>
<dbReference type="PIR" id="I56214">
    <property type="entry name" value="A40738"/>
</dbReference>
<dbReference type="RefSeq" id="NP_001243.1">
    <molecule id="P32970-1"/>
    <property type="nucleotide sequence ID" value="NM_001252.5"/>
</dbReference>
<dbReference type="RefSeq" id="NP_001317261.1">
    <molecule id="P32970-2"/>
    <property type="nucleotide sequence ID" value="NM_001330332.2"/>
</dbReference>
<dbReference type="RefSeq" id="XP_054178722.1">
    <molecule id="P32970-1"/>
    <property type="nucleotide sequence ID" value="XM_054322747.1"/>
</dbReference>
<dbReference type="RefSeq" id="XP_054178723.1">
    <molecule id="P32970-1"/>
    <property type="nucleotide sequence ID" value="XM_054322748.1"/>
</dbReference>
<dbReference type="PDB" id="7KX0">
    <property type="method" value="X-ray"/>
    <property type="resolution" value="2.69 A"/>
    <property type="chains" value="A/B/C=39-193"/>
</dbReference>
<dbReference type="PDBsum" id="7KX0"/>
<dbReference type="SMR" id="P32970"/>
<dbReference type="BioGRID" id="107408">
    <property type="interactions" value="190"/>
</dbReference>
<dbReference type="FunCoup" id="P32970">
    <property type="interactions" value="357"/>
</dbReference>
<dbReference type="IntAct" id="P32970">
    <property type="interactions" value="162"/>
</dbReference>
<dbReference type="STRING" id="9606.ENSP00000395294"/>
<dbReference type="ChEMBL" id="CHEMBL3712913"/>
<dbReference type="DrugBank" id="DB15100">
    <property type="generic name" value="Cusatuzumab"/>
</dbReference>
<dbReference type="GlyCosmos" id="P32970">
    <property type="glycosylation" value="2 sites, No reported glycans"/>
</dbReference>
<dbReference type="GlyGen" id="P32970">
    <property type="glycosylation" value="4 sites, 14 N-linked glycans (2 sites), 2 O-linked glycans (1 site)"/>
</dbReference>
<dbReference type="iPTMnet" id="P32970"/>
<dbReference type="PhosphoSitePlus" id="P32970"/>
<dbReference type="SwissPalm" id="P32970"/>
<dbReference type="BioMuta" id="CD70"/>
<dbReference type="DMDM" id="21431837"/>
<dbReference type="CPTAC" id="CPTAC-5959"/>
<dbReference type="jPOST" id="P32970"/>
<dbReference type="MassIVE" id="P32970"/>
<dbReference type="PaxDb" id="9606-ENSP00000245903"/>
<dbReference type="PeptideAtlas" id="P32970"/>
<dbReference type="ProteomicsDB" id="4807"/>
<dbReference type="ProteomicsDB" id="54894">
    <molecule id="P32970-1"/>
</dbReference>
<dbReference type="Pumba" id="P32970"/>
<dbReference type="ABCD" id="P32970">
    <property type="antibodies" value="41 sequenced antibodies"/>
</dbReference>
<dbReference type="Antibodypedia" id="24212">
    <property type="antibodies" value="1013 antibodies from 41 providers"/>
</dbReference>
<dbReference type="CPTC" id="P32970">
    <property type="antibodies" value="3 antibodies"/>
</dbReference>
<dbReference type="DNASU" id="970"/>
<dbReference type="Ensembl" id="ENST00000245903.4">
    <molecule id="P32970-1"/>
    <property type="protein sequence ID" value="ENSP00000245903.2"/>
    <property type="gene ID" value="ENSG00000125726.11"/>
</dbReference>
<dbReference type="Ensembl" id="ENST00000423145.7">
    <molecule id="P32970-2"/>
    <property type="protein sequence ID" value="ENSP00000395294.2"/>
    <property type="gene ID" value="ENSG00000125726.11"/>
</dbReference>
<dbReference type="GeneID" id="970"/>
<dbReference type="KEGG" id="hsa:970"/>
<dbReference type="MANE-Select" id="ENST00000245903.4">
    <property type="protein sequence ID" value="ENSP00000245903.2"/>
    <property type="RefSeq nucleotide sequence ID" value="NM_001252.5"/>
    <property type="RefSeq protein sequence ID" value="NP_001243.1"/>
</dbReference>
<dbReference type="UCSC" id="uc002mfi.3">
    <molecule id="P32970-1"/>
    <property type="organism name" value="human"/>
</dbReference>
<dbReference type="AGR" id="HGNC:11937"/>
<dbReference type="CTD" id="970"/>
<dbReference type="DisGeNET" id="970"/>
<dbReference type="GeneCards" id="CD70"/>
<dbReference type="HGNC" id="HGNC:11937">
    <property type="gene designation" value="CD70"/>
</dbReference>
<dbReference type="HPA" id="ENSG00000125726">
    <property type="expression patterns" value="Tissue enhanced (lymphoid)"/>
</dbReference>
<dbReference type="MalaCards" id="CD70"/>
<dbReference type="MIM" id="602840">
    <property type="type" value="gene"/>
</dbReference>
<dbReference type="MIM" id="618261">
    <property type="type" value="phenotype"/>
</dbReference>
<dbReference type="neXtProt" id="NX_P32970"/>
<dbReference type="OpenTargets" id="ENSG00000125726"/>
<dbReference type="Orphanet" id="538958">
    <property type="disease" value="Combined immunodeficiency due to CD70 deficiency"/>
</dbReference>
<dbReference type="PharmGKB" id="PA36627"/>
<dbReference type="VEuPathDB" id="HostDB:ENSG00000125726"/>
<dbReference type="eggNOG" id="ENOG502TEKD">
    <property type="taxonomic scope" value="Eukaryota"/>
</dbReference>
<dbReference type="GeneTree" id="ENSGT00390000006744"/>
<dbReference type="HOGENOM" id="CLU_114585_0_0_1"/>
<dbReference type="InParanoid" id="P32970"/>
<dbReference type="OMA" id="FGIQWVH"/>
<dbReference type="OrthoDB" id="9444364at2759"/>
<dbReference type="PAN-GO" id="P32970">
    <property type="GO annotations" value="1 GO annotation based on evolutionary models"/>
</dbReference>
<dbReference type="PhylomeDB" id="P32970"/>
<dbReference type="TreeFam" id="TF338269"/>
<dbReference type="PathwayCommons" id="P32970"/>
<dbReference type="Reactome" id="R-HSA-5669034">
    <property type="pathway name" value="TNFs bind their physiological receptors"/>
</dbReference>
<dbReference type="SignaLink" id="P32970"/>
<dbReference type="SIGNOR" id="P32970"/>
<dbReference type="BioGRID-ORCS" id="970">
    <property type="hits" value="11 hits in 1152 CRISPR screens"/>
</dbReference>
<dbReference type="ChiTaRS" id="CD70">
    <property type="organism name" value="human"/>
</dbReference>
<dbReference type="GenomeRNAi" id="970"/>
<dbReference type="Pharos" id="P32970">
    <property type="development level" value="Tbio"/>
</dbReference>
<dbReference type="PRO" id="PR:P32970"/>
<dbReference type="Proteomes" id="UP000005640">
    <property type="component" value="Chromosome 19"/>
</dbReference>
<dbReference type="RNAct" id="P32970">
    <property type="molecule type" value="protein"/>
</dbReference>
<dbReference type="Bgee" id="ENSG00000125726">
    <property type="expression patterns" value="Expressed in cartilage tissue and 130 other cell types or tissues"/>
</dbReference>
<dbReference type="ExpressionAtlas" id="P32970">
    <property type="expression patterns" value="baseline and differential"/>
</dbReference>
<dbReference type="GO" id="GO:0070062">
    <property type="term" value="C:extracellular exosome"/>
    <property type="evidence" value="ECO:0007005"/>
    <property type="project" value="UniProtKB"/>
</dbReference>
<dbReference type="GO" id="GO:0005886">
    <property type="term" value="C:plasma membrane"/>
    <property type="evidence" value="ECO:0000314"/>
    <property type="project" value="UniProtKB"/>
</dbReference>
<dbReference type="GO" id="GO:0048018">
    <property type="term" value="F:receptor ligand activity"/>
    <property type="evidence" value="ECO:0000314"/>
    <property type="project" value="UniProtKB"/>
</dbReference>
<dbReference type="GO" id="GO:0005164">
    <property type="term" value="F:tumor necrosis factor receptor binding"/>
    <property type="evidence" value="ECO:0007669"/>
    <property type="project" value="InterPro"/>
</dbReference>
<dbReference type="GO" id="GO:0090717">
    <property type="term" value="P:adaptive immune memory response involving T cells and B cells"/>
    <property type="evidence" value="ECO:0000315"/>
    <property type="project" value="UniProtKB"/>
</dbReference>
<dbReference type="GO" id="GO:0019724">
    <property type="term" value="P:B cell mediated immunity"/>
    <property type="evidence" value="ECO:0000315"/>
    <property type="project" value="UniProtKB"/>
</dbReference>
<dbReference type="GO" id="GO:0042100">
    <property type="term" value="P:B cell proliferation"/>
    <property type="evidence" value="ECO:0000315"/>
    <property type="project" value="UniProtKB"/>
</dbReference>
<dbReference type="GO" id="GO:0160162">
    <property type="term" value="P:CD27 signaling pathway"/>
    <property type="evidence" value="ECO:0000314"/>
    <property type="project" value="UniProtKB"/>
</dbReference>
<dbReference type="GO" id="GO:0097191">
    <property type="term" value="P:extrinsic apoptotic signaling pathway"/>
    <property type="evidence" value="ECO:0000314"/>
    <property type="project" value="BHF-UCL"/>
</dbReference>
<dbReference type="GO" id="GO:0042102">
    <property type="term" value="P:positive regulation of T cell proliferation"/>
    <property type="evidence" value="ECO:0000304"/>
    <property type="project" value="GO_Central"/>
</dbReference>
<dbReference type="GO" id="GO:0042110">
    <property type="term" value="P:T cell activation"/>
    <property type="evidence" value="ECO:0000314"/>
    <property type="project" value="UniProtKB"/>
</dbReference>
<dbReference type="GO" id="GO:0002456">
    <property type="term" value="P:T cell mediated immunity"/>
    <property type="evidence" value="ECO:0000315"/>
    <property type="project" value="UniProtKB"/>
</dbReference>
<dbReference type="GO" id="GO:0042098">
    <property type="term" value="P:T cell proliferation"/>
    <property type="evidence" value="ECO:0007669"/>
    <property type="project" value="Ensembl"/>
</dbReference>
<dbReference type="GO" id="GO:0033209">
    <property type="term" value="P:tumor necrosis factor-mediated signaling pathway"/>
    <property type="evidence" value="ECO:0007669"/>
    <property type="project" value="InterPro"/>
</dbReference>
<dbReference type="CDD" id="cd00184">
    <property type="entry name" value="TNF"/>
    <property type="match status" value="1"/>
</dbReference>
<dbReference type="FunFam" id="2.60.120.40:FF:000027">
    <property type="entry name" value="CD70 antigen"/>
    <property type="match status" value="1"/>
</dbReference>
<dbReference type="Gene3D" id="2.60.120.40">
    <property type="match status" value="1"/>
</dbReference>
<dbReference type="InterPro" id="IPR042374">
    <property type="entry name" value="CD70"/>
</dbReference>
<dbReference type="InterPro" id="IPR021184">
    <property type="entry name" value="TNF_CS"/>
</dbReference>
<dbReference type="InterPro" id="IPR006052">
    <property type="entry name" value="TNF_dom"/>
</dbReference>
<dbReference type="InterPro" id="IPR008983">
    <property type="entry name" value="Tumour_necrosis_fac-like_dom"/>
</dbReference>
<dbReference type="PANTHER" id="PTHR15152">
    <property type="entry name" value="CD70 ANTIGEN"/>
    <property type="match status" value="1"/>
</dbReference>
<dbReference type="PANTHER" id="PTHR15152:SF0">
    <property type="entry name" value="CD70 ANTIGEN"/>
    <property type="match status" value="1"/>
</dbReference>
<dbReference type="Pfam" id="PF00229">
    <property type="entry name" value="TNF"/>
    <property type="match status" value="1"/>
</dbReference>
<dbReference type="SMART" id="SM00207">
    <property type="entry name" value="TNF"/>
    <property type="match status" value="1"/>
</dbReference>
<dbReference type="SUPFAM" id="SSF49842">
    <property type="entry name" value="TNF-like"/>
    <property type="match status" value="1"/>
</dbReference>
<dbReference type="PROSITE" id="PS00251">
    <property type="entry name" value="THD_1"/>
    <property type="match status" value="1"/>
</dbReference>
<dbReference type="PROSITE" id="PS50049">
    <property type="entry name" value="THD_2"/>
    <property type="match status" value="1"/>
</dbReference>
<reference key="1">
    <citation type="journal article" date="1993" name="Cell">
        <title>Molecular and biological characterization of a ligand for CD27 defines a new family of cytokines with homology to tumor necrosis factor.</title>
        <authorList>
            <person name="Goodwin R.G."/>
            <person name="Alderson M.R."/>
            <person name="Smith C.A."/>
            <person name="Armitage R.J."/>
            <person name="Vandenbos T."/>
            <person name="Jerzy R."/>
            <person name="Tough T.W."/>
            <person name="Schoenborn M.A."/>
            <person name="David-Smith T."/>
            <person name="Hennen K."/>
            <person name="Falk B."/>
            <person name="Cosman D."/>
            <person name="Baker E."/>
            <person name="Sutherland G.R."/>
            <person name="Grabstein K.H."/>
            <person name="Farrah T."/>
            <person name="Giri J.G."/>
            <person name="Beckmann M.P."/>
        </authorList>
    </citation>
    <scope>NUCLEOTIDE SEQUENCE [MRNA] (ISOFORM 1)</scope>
    <scope>FUNCTION</scope>
    <scope>SUBCELLULAR LOCATION</scope>
    <source>
        <tissue>B-cell</tissue>
    </source>
</reference>
<reference key="2">
    <citation type="journal article" date="1994" name="J. Immunol.">
        <title>The cloning of CD70 and its identification as the ligand for CD27.</title>
        <authorList>
            <person name="Bowman M.R."/>
            <person name="Crimmins M.A."/>
            <person name="Yetz-Aldape J."/>
            <person name="Kriz R."/>
            <person name="Kelleher K."/>
            <person name="Herrmann S."/>
        </authorList>
    </citation>
    <scope>NUCLEOTIDE SEQUENCE [MRNA] (ISOFORM 1)</scope>
    <scope>SUBCELLULAR LOCATION</scope>
</reference>
<reference key="3">
    <citation type="submission" date="2003-05" db="EMBL/GenBank/DDBJ databases">
        <title>Cloning of human full-length CDSs in BD Creator(TM) system donor vector.</title>
        <authorList>
            <person name="Kalnine N."/>
            <person name="Chen X."/>
            <person name="Rolfs A."/>
            <person name="Halleck A."/>
            <person name="Hines L."/>
            <person name="Eisenstein S."/>
            <person name="Koundinya M."/>
            <person name="Raphael J."/>
            <person name="Moreira D."/>
            <person name="Kelley T."/>
            <person name="LaBaer J."/>
            <person name="Lin Y."/>
            <person name="Phelan M."/>
            <person name="Farmer A."/>
        </authorList>
    </citation>
    <scope>NUCLEOTIDE SEQUENCE [LARGE SCALE MRNA] (ISOFORM 1)</scope>
</reference>
<reference key="4">
    <citation type="journal article" date="2004" name="Nat. Genet.">
        <title>Complete sequencing and characterization of 21,243 full-length human cDNAs.</title>
        <authorList>
            <person name="Ota T."/>
            <person name="Suzuki Y."/>
            <person name="Nishikawa T."/>
            <person name="Otsuki T."/>
            <person name="Sugiyama T."/>
            <person name="Irie R."/>
            <person name="Wakamatsu A."/>
            <person name="Hayashi K."/>
            <person name="Sato H."/>
            <person name="Nagai K."/>
            <person name="Kimura K."/>
            <person name="Makita H."/>
            <person name="Sekine M."/>
            <person name="Obayashi M."/>
            <person name="Nishi T."/>
            <person name="Shibahara T."/>
            <person name="Tanaka T."/>
            <person name="Ishii S."/>
            <person name="Yamamoto J."/>
            <person name="Saito K."/>
            <person name="Kawai Y."/>
            <person name="Isono Y."/>
            <person name="Nakamura Y."/>
            <person name="Nagahari K."/>
            <person name="Murakami K."/>
            <person name="Yasuda T."/>
            <person name="Iwayanagi T."/>
            <person name="Wagatsuma M."/>
            <person name="Shiratori A."/>
            <person name="Sudo H."/>
            <person name="Hosoiri T."/>
            <person name="Kaku Y."/>
            <person name="Kodaira H."/>
            <person name="Kondo H."/>
            <person name="Sugawara M."/>
            <person name="Takahashi M."/>
            <person name="Kanda K."/>
            <person name="Yokoi T."/>
            <person name="Furuya T."/>
            <person name="Kikkawa E."/>
            <person name="Omura Y."/>
            <person name="Abe K."/>
            <person name="Kamihara K."/>
            <person name="Katsuta N."/>
            <person name="Sato K."/>
            <person name="Tanikawa M."/>
            <person name="Yamazaki M."/>
            <person name="Ninomiya K."/>
            <person name="Ishibashi T."/>
            <person name="Yamashita H."/>
            <person name="Murakawa K."/>
            <person name="Fujimori K."/>
            <person name="Tanai H."/>
            <person name="Kimata M."/>
            <person name="Watanabe M."/>
            <person name="Hiraoka S."/>
            <person name="Chiba Y."/>
            <person name="Ishida S."/>
            <person name="Ono Y."/>
            <person name="Takiguchi S."/>
            <person name="Watanabe S."/>
            <person name="Yosida M."/>
            <person name="Hotuta T."/>
            <person name="Kusano J."/>
            <person name="Kanehori K."/>
            <person name="Takahashi-Fujii A."/>
            <person name="Hara H."/>
            <person name="Tanase T.-O."/>
            <person name="Nomura Y."/>
            <person name="Togiya S."/>
            <person name="Komai F."/>
            <person name="Hara R."/>
            <person name="Takeuchi K."/>
            <person name="Arita M."/>
            <person name="Imose N."/>
            <person name="Musashino K."/>
            <person name="Yuuki H."/>
            <person name="Oshima A."/>
            <person name="Sasaki N."/>
            <person name="Aotsuka S."/>
            <person name="Yoshikawa Y."/>
            <person name="Matsunawa H."/>
            <person name="Ichihara T."/>
            <person name="Shiohata N."/>
            <person name="Sano S."/>
            <person name="Moriya S."/>
            <person name="Momiyama H."/>
            <person name="Satoh N."/>
            <person name="Takami S."/>
            <person name="Terashima Y."/>
            <person name="Suzuki O."/>
            <person name="Nakagawa S."/>
            <person name="Senoh A."/>
            <person name="Mizoguchi H."/>
            <person name="Goto Y."/>
            <person name="Shimizu F."/>
            <person name="Wakebe H."/>
            <person name="Hishigaki H."/>
            <person name="Watanabe T."/>
            <person name="Sugiyama A."/>
            <person name="Takemoto M."/>
            <person name="Kawakami B."/>
            <person name="Yamazaki M."/>
            <person name="Watanabe K."/>
            <person name="Kumagai A."/>
            <person name="Itakura S."/>
            <person name="Fukuzumi Y."/>
            <person name="Fujimori Y."/>
            <person name="Komiyama M."/>
            <person name="Tashiro H."/>
            <person name="Tanigami A."/>
            <person name="Fujiwara T."/>
            <person name="Ono T."/>
            <person name="Yamada K."/>
            <person name="Fujii Y."/>
            <person name="Ozaki K."/>
            <person name="Hirao M."/>
            <person name="Ohmori Y."/>
            <person name="Kawabata A."/>
            <person name="Hikiji T."/>
            <person name="Kobatake N."/>
            <person name="Inagaki H."/>
            <person name="Ikema Y."/>
            <person name="Okamoto S."/>
            <person name="Okitani R."/>
            <person name="Kawakami T."/>
            <person name="Noguchi S."/>
            <person name="Itoh T."/>
            <person name="Shigeta K."/>
            <person name="Senba T."/>
            <person name="Matsumura K."/>
            <person name="Nakajima Y."/>
            <person name="Mizuno T."/>
            <person name="Morinaga M."/>
            <person name="Sasaki M."/>
            <person name="Togashi T."/>
            <person name="Oyama M."/>
            <person name="Hata H."/>
            <person name="Watanabe M."/>
            <person name="Komatsu T."/>
            <person name="Mizushima-Sugano J."/>
            <person name="Satoh T."/>
            <person name="Shirai Y."/>
            <person name="Takahashi Y."/>
            <person name="Nakagawa K."/>
            <person name="Okumura K."/>
            <person name="Nagase T."/>
            <person name="Nomura N."/>
            <person name="Kikuchi H."/>
            <person name="Masuho Y."/>
            <person name="Yamashita R."/>
            <person name="Nakai K."/>
            <person name="Yada T."/>
            <person name="Nakamura Y."/>
            <person name="Ohara O."/>
            <person name="Isogai T."/>
            <person name="Sugano S."/>
        </authorList>
    </citation>
    <scope>NUCLEOTIDE SEQUENCE [LARGE SCALE MRNA] (ISOFORM 2)</scope>
</reference>
<reference key="5">
    <citation type="submission" date="2006-10" db="EMBL/GenBank/DDBJ databases">
        <authorList>
            <person name="Livingston R.J."/>
            <person name="Shaffer T."/>
            <person name="McFarland I."/>
            <person name="Nguyen C.P."/>
            <person name="Stanaway I.B."/>
            <person name="Rajkumar N."/>
            <person name="Johnson E.J."/>
            <person name="da Ponte S.H."/>
            <person name="Willa H."/>
            <person name="Ahearn M.O."/>
            <person name="Bertucci C."/>
            <person name="Acklestad J."/>
            <person name="Carroll A."/>
            <person name="Swanson J."/>
            <person name="Gildersleeve H.I."/>
            <person name="Nickerson D.A."/>
        </authorList>
    </citation>
    <scope>NUCLEOTIDE SEQUENCE [GENOMIC DNA]</scope>
</reference>
<reference key="6">
    <citation type="journal article" date="2004" name="Nature">
        <title>The DNA sequence and biology of human chromosome 19.</title>
        <authorList>
            <person name="Grimwood J."/>
            <person name="Gordon L.A."/>
            <person name="Olsen A.S."/>
            <person name="Terry A."/>
            <person name="Schmutz J."/>
            <person name="Lamerdin J.E."/>
            <person name="Hellsten U."/>
            <person name="Goodstein D."/>
            <person name="Couronne O."/>
            <person name="Tran-Gyamfi M."/>
            <person name="Aerts A."/>
            <person name="Altherr M."/>
            <person name="Ashworth L."/>
            <person name="Bajorek E."/>
            <person name="Black S."/>
            <person name="Branscomb E."/>
            <person name="Caenepeel S."/>
            <person name="Carrano A.V."/>
            <person name="Caoile C."/>
            <person name="Chan Y.M."/>
            <person name="Christensen M."/>
            <person name="Cleland C.A."/>
            <person name="Copeland A."/>
            <person name="Dalin E."/>
            <person name="Dehal P."/>
            <person name="Denys M."/>
            <person name="Detter J.C."/>
            <person name="Escobar J."/>
            <person name="Flowers D."/>
            <person name="Fotopulos D."/>
            <person name="Garcia C."/>
            <person name="Georgescu A.M."/>
            <person name="Glavina T."/>
            <person name="Gomez M."/>
            <person name="Gonzales E."/>
            <person name="Groza M."/>
            <person name="Hammon N."/>
            <person name="Hawkins T."/>
            <person name="Haydu L."/>
            <person name="Ho I."/>
            <person name="Huang W."/>
            <person name="Israni S."/>
            <person name="Jett J."/>
            <person name="Kadner K."/>
            <person name="Kimball H."/>
            <person name="Kobayashi A."/>
            <person name="Larionov V."/>
            <person name="Leem S.-H."/>
            <person name="Lopez F."/>
            <person name="Lou Y."/>
            <person name="Lowry S."/>
            <person name="Malfatti S."/>
            <person name="Martinez D."/>
            <person name="McCready P.M."/>
            <person name="Medina C."/>
            <person name="Morgan J."/>
            <person name="Nelson K."/>
            <person name="Nolan M."/>
            <person name="Ovcharenko I."/>
            <person name="Pitluck S."/>
            <person name="Pollard M."/>
            <person name="Popkie A.P."/>
            <person name="Predki P."/>
            <person name="Quan G."/>
            <person name="Ramirez L."/>
            <person name="Rash S."/>
            <person name="Retterer J."/>
            <person name="Rodriguez A."/>
            <person name="Rogers S."/>
            <person name="Salamov A."/>
            <person name="Salazar A."/>
            <person name="She X."/>
            <person name="Smith D."/>
            <person name="Slezak T."/>
            <person name="Solovyev V."/>
            <person name="Thayer N."/>
            <person name="Tice H."/>
            <person name="Tsai M."/>
            <person name="Ustaszewska A."/>
            <person name="Vo N."/>
            <person name="Wagner M."/>
            <person name="Wheeler J."/>
            <person name="Wu K."/>
            <person name="Xie G."/>
            <person name="Yang J."/>
            <person name="Dubchak I."/>
            <person name="Furey T.S."/>
            <person name="DeJong P."/>
            <person name="Dickson M."/>
            <person name="Gordon D."/>
            <person name="Eichler E.E."/>
            <person name="Pennacchio L.A."/>
            <person name="Richardson P."/>
            <person name="Stubbs L."/>
            <person name="Rokhsar D.S."/>
            <person name="Myers R.M."/>
            <person name="Rubin E.M."/>
            <person name="Lucas S.M."/>
        </authorList>
    </citation>
    <scope>NUCLEOTIDE SEQUENCE [LARGE SCALE GENOMIC DNA]</scope>
</reference>
<reference key="7">
    <citation type="submission" date="2005-07" db="EMBL/GenBank/DDBJ databases">
        <authorList>
            <person name="Mural R.J."/>
            <person name="Istrail S."/>
            <person name="Sutton G."/>
            <person name="Florea L."/>
            <person name="Halpern A.L."/>
            <person name="Mobarry C.M."/>
            <person name="Lippert R."/>
            <person name="Walenz B."/>
            <person name="Shatkay H."/>
            <person name="Dew I."/>
            <person name="Miller J.R."/>
            <person name="Flanigan M.J."/>
            <person name="Edwards N.J."/>
            <person name="Bolanos R."/>
            <person name="Fasulo D."/>
            <person name="Halldorsson B.V."/>
            <person name="Hannenhalli S."/>
            <person name="Turner R."/>
            <person name="Yooseph S."/>
            <person name="Lu F."/>
            <person name="Nusskern D.R."/>
            <person name="Shue B.C."/>
            <person name="Zheng X.H."/>
            <person name="Zhong F."/>
            <person name="Delcher A.L."/>
            <person name="Huson D.H."/>
            <person name="Kravitz S.A."/>
            <person name="Mouchard L."/>
            <person name="Reinert K."/>
            <person name="Remington K.A."/>
            <person name="Clark A.G."/>
            <person name="Waterman M.S."/>
            <person name="Eichler E.E."/>
            <person name="Adams M.D."/>
            <person name="Hunkapiller M.W."/>
            <person name="Myers E.W."/>
            <person name="Venter J.C."/>
        </authorList>
    </citation>
    <scope>NUCLEOTIDE SEQUENCE [LARGE SCALE GENOMIC DNA]</scope>
</reference>
<reference key="8">
    <citation type="journal article" date="2004" name="Genome Res.">
        <title>The status, quality, and expansion of the NIH full-length cDNA project: the Mammalian Gene Collection (MGC).</title>
        <authorList>
            <consortium name="The MGC Project Team"/>
        </authorList>
    </citation>
    <scope>NUCLEOTIDE SEQUENCE [LARGE SCALE MRNA] (ISOFORM 1)</scope>
    <source>
        <tissue>Kidney</tissue>
    </source>
</reference>
<reference key="9">
    <citation type="journal article" date="2012" name="Proc. Natl. Acad. Sci. U.S.A.">
        <title>N-terminal acetylome analyses and functional insights of the N-terminal acetyltransferase NatB.</title>
        <authorList>
            <person name="Van Damme P."/>
            <person name="Lasa M."/>
            <person name="Polevoda B."/>
            <person name="Gazquez C."/>
            <person name="Elosegui-Artola A."/>
            <person name="Kim D.S."/>
            <person name="De Juan-Pardo E."/>
            <person name="Demeyer K."/>
            <person name="Hole K."/>
            <person name="Larrea E."/>
            <person name="Timmerman E."/>
            <person name="Prieto J."/>
            <person name="Arnesen T."/>
            <person name="Sherman F."/>
            <person name="Gevaert K."/>
            <person name="Aldabe R."/>
        </authorList>
    </citation>
    <scope>IDENTIFICATION BY MASS SPECTROMETRY [LARGE SCALE ANALYSIS]</scope>
</reference>
<reference key="10">
    <citation type="journal article" date="2002" name="Int. J. Cancer">
        <title>CD70/CD27 ligand, a member of the TNF family, is expressed in human brain tumors.</title>
        <authorList>
            <person name="Held-Feindt J."/>
            <person name="Mentlein R."/>
        </authorList>
    </citation>
    <scope>SUBCELLULAR LOCATION</scope>
</reference>
<reference evidence="15" key="11">
    <citation type="journal article" date="2021" name="J. Biol. Chem.">
        <title>Structural delineation and phase-dependent activation of the costimulatory CD27:CD70 complex.</title>
        <authorList>
            <person name="Liu W."/>
            <person name="Maben Z."/>
            <person name="Wang C."/>
            <person name="Lindquist K.C."/>
            <person name="Li M."/>
            <person name="Rayannavar V."/>
            <person name="Lopez Armenta I."/>
            <person name="Nager A."/>
            <person name="Pascua E."/>
            <person name="Dominik P.K."/>
            <person name="Oyen D."/>
            <person name="Wang H."/>
            <person name="Roach R.C."/>
            <person name="Allan C.M."/>
            <person name="Mosyak L."/>
            <person name="Chaparro-Riggers J."/>
        </authorList>
    </citation>
    <scope>X-RAY CRYSTALLOGRAPHY (2.69 ANGSTROMS) OF 39-193 IN COMPLEX WITH CD70</scope>
    <scope>SUBUNIT</scope>
    <scope>DISULFIDE BONDS</scope>
    <scope>GLYCOSYLATION</scope>
    <scope>MUTAGENESIS OF GLN-61; ASN-63; THR-65; ALA-80; ARG-83; CYS-115; CYS-133; PRO-135; SER-137; ARG-144; SER-146; HIS-148; CYS-151; ASP-165; CYS-168; ASN-170; SER-178 AND ASN-180</scope>
</reference>
<reference key="12">
    <citation type="journal article" date="2017" name="J. Exp. Med.">
        <title>Inherited CD70 deficiency in humans reveals a critical role for the CD70-CD27 pathway in immunity to Epstein-Barr virus infection.</title>
        <authorList>
            <person name="Izawa K."/>
            <person name="Martin E."/>
            <person name="Soudais C."/>
            <person name="Bruneau J."/>
            <person name="Boutboul D."/>
            <person name="Rodriguez R."/>
            <person name="Lenoir C."/>
            <person name="Hislop A.D."/>
            <person name="Besson C."/>
            <person name="Touzot F."/>
            <person name="Picard C."/>
            <person name="Callebaut I."/>
            <person name="de Villartay J.P."/>
            <person name="Moshous D."/>
            <person name="Fischer A."/>
            <person name="Latour S."/>
        </authorList>
    </citation>
    <scope>VARIANT LPFS3 179-ARG--PRO-193 DEL</scope>
    <scope>CHARACTERIZATION OF VARIANT LPFS3 179-ARG--PRO-193 DEL</scope>
    <scope>INVOLVEMENT IN LPFS3</scope>
    <scope>FUNCTION</scope>
    <scope>SUBCELLULAR LOCATION</scope>
</reference>
<reference key="13">
    <citation type="journal article" date="2017" name="J. Exp. Med.">
        <title>Combined immunodeficiency and Epstein-Barr virus-induced B cell malignancy in humans with inherited CD70 deficiency.</title>
        <authorList>
            <person name="Abolhassani H."/>
            <person name="Edwards E.S."/>
            <person name="Ikinciogullari A."/>
            <person name="Jing H."/>
            <person name="Borte S."/>
            <person name="Buggert M."/>
            <person name="Du L."/>
            <person name="Matsuda-Lennikov M."/>
            <person name="Romano R."/>
            <person name="Caridha R."/>
            <person name="Bade S."/>
            <person name="Zhang Y."/>
            <person name="Frederiksen J."/>
            <person name="Fang M."/>
            <person name="Bal S.K."/>
            <person name="Haskologlu S."/>
            <person name="Dogu F."/>
            <person name="Tacyildiz N."/>
            <person name="Matthews H.F."/>
            <person name="McElwee J.J."/>
            <person name="Gostick E."/>
            <person name="Price D.A."/>
            <person name="Palendira U."/>
            <person name="Aghamohammadi A."/>
            <person name="Boisson B."/>
            <person name="Rezaei N."/>
            <person name="Karlsson A.C."/>
            <person name="Lenardo M.J."/>
            <person name="Casanova J.L."/>
            <person name="Hammarstroem L."/>
            <person name="Tangye S.G."/>
            <person name="Su H.C."/>
            <person name="Pan-Hammarstroem Q."/>
        </authorList>
    </citation>
    <scope>VARIANT LPFS3 186-PHE--PRO-193 DEL</scope>
    <scope>CHARACTERIZATION OF VARIANT LPFS3 186-PHE--PRO-193 DEL</scope>
    <scope>INVOLVEMENT IN LPFS3</scope>
    <scope>FUNCTION</scope>
    <scope>SUBCELLULAR LOCATION</scope>
</reference>
<proteinExistence type="evidence at protein level"/>
<name>CD70_HUMAN</name>
<sequence length="193" mass="21118">MPEEGSGCSVRRRPYGCVLRAALVPLVAGLVICLVVCIQRFAQAQQQLPLESLGWDVAELQLNHTGPQQDPRLYWQGGPALGRSFLHGPELDKGQLRIHRDGIYMVHIQVTLAICSSTTASRHHPTTLAVGICSPASRSISLLRLSFHQGCTIASQRLTPLARGDTLCTNLTGTLLPSRNTDETFFGVQWVRP</sequence>
<feature type="chain" id="PRO_0000185497" description="CD70 antigen">
    <location>
        <begin position="1"/>
        <end position="193"/>
    </location>
</feature>
<feature type="topological domain" description="Cytoplasmic" evidence="1">
    <location>
        <begin position="1"/>
        <end position="17"/>
    </location>
</feature>
<feature type="transmembrane region" description="Helical; Signal-anchor for type II membrane protein" evidence="1">
    <location>
        <begin position="18"/>
        <end position="38"/>
    </location>
</feature>
<feature type="topological domain" description="Extracellular" evidence="1">
    <location>
        <begin position="39"/>
        <end position="193"/>
    </location>
</feature>
<feature type="domain" description="THD" evidence="2">
    <location>
        <begin position="56"/>
        <end position="191"/>
    </location>
</feature>
<feature type="glycosylation site" description="N-linked (GlcNAc...) asparagine" evidence="1">
    <location>
        <position position="63"/>
    </location>
</feature>
<feature type="glycosylation site" description="N-linked (GlcNAc...) asparagine" evidence="1">
    <location>
        <position position="170"/>
    </location>
</feature>
<feature type="disulfide bond" evidence="2 6 15">
    <location>
        <begin position="115"/>
        <end position="151"/>
    </location>
</feature>
<feature type="disulfide bond" evidence="2 6 15">
    <location>
        <begin position="133"/>
        <end position="168"/>
    </location>
</feature>
<feature type="splice variant" id="VSP_056416" description="In isoform 2." evidence="9">
    <original>CTIASQRLTPLARGDTLCTNLTGTLLPSRNTDETFFGVQWVRP</original>
    <variation>LFGFWNWGLKVKCFLRHLIWTAHCFIPLTQLVFMQALQSWRNHHCSHFTDEENRGVNR</variation>
    <location>
        <begin position="151"/>
        <end position="193"/>
    </location>
</feature>
<feature type="sequence variant" id="VAR_081988" description="In LPFS3; loss of protein expression." evidence="4">
    <location>
        <begin position="179"/>
        <end position="193"/>
    </location>
</feature>
<feature type="sequence variant" id="VAR_081989" description="In LPFS3; no effect on protein expression; loss of interaction with CD27." evidence="5">
    <location>
        <begin position="186"/>
        <end position="193"/>
    </location>
</feature>
<feature type="mutagenesis site" description="Decreased CD27 binding." evidence="6">
    <original>Q</original>
    <variation>A</variation>
    <location>
        <position position="61"/>
    </location>
</feature>
<feature type="mutagenesis site" description="Loss of protein expression." evidence="6">
    <original>N</original>
    <variation>Q</variation>
    <location>
        <position position="63"/>
    </location>
</feature>
<feature type="mutagenesis site" description="Loss of protein expression." evidence="6">
    <original>T</original>
    <variation>A</variation>
    <location>
        <position position="65"/>
    </location>
</feature>
<feature type="mutagenesis site" description="Decreased CD27 binding." evidence="6">
    <original>A</original>
    <variation>R</variation>
    <variation>F</variation>
    <location>
        <position position="80"/>
    </location>
</feature>
<feature type="mutagenesis site" description="Loss of CD27 binding." evidence="6">
    <original>R</original>
    <variation>A</variation>
    <variation>E</variation>
    <variation>K</variation>
    <location>
        <position position="83"/>
    </location>
</feature>
<feature type="mutagenesis site" description="No effect on protein expression but loss of CD27 binding; when associated with A-151." evidence="6">
    <original>C</original>
    <variation>A</variation>
    <location>
        <position position="115"/>
    </location>
</feature>
<feature type="mutagenesis site" description="Loss of protein expression; when associated with A-168." evidence="6">
    <original>C</original>
    <variation>A</variation>
    <location>
        <position position="133"/>
    </location>
</feature>
<feature type="mutagenesis site" description="Decreased protein expression." evidence="6">
    <original>P</original>
    <variation>A</variation>
    <location>
        <position position="135"/>
    </location>
</feature>
<feature type="mutagenesis site" description="No effect on CD27 binding." evidence="6">
    <original>S</original>
    <variation>A</variation>
    <variation>K</variation>
    <location>
        <position position="137"/>
    </location>
</feature>
<feature type="mutagenesis site" description="Decreased CD27 binding." evidence="6">
    <original>S</original>
    <variation>E</variation>
    <location>
        <position position="137"/>
    </location>
</feature>
<feature type="mutagenesis site" description="Decreased CD27 binding." evidence="6">
    <original>R</original>
    <variation>A</variation>
    <variation>E</variation>
    <location>
        <position position="144"/>
    </location>
</feature>
<feature type="mutagenesis site" description="No effect on CD27 binding." evidence="6">
    <original>S</original>
    <variation>A</variation>
    <location>
        <position position="146"/>
    </location>
</feature>
<feature type="mutagenesis site" description="Loss of CD27 binding." evidence="6">
    <original>S</original>
    <variation>D</variation>
    <location>
        <position position="146"/>
    </location>
</feature>
<feature type="mutagenesis site" description="Decreased CD27 binding." evidence="6">
    <original>H</original>
    <variation>A</variation>
    <variation>E</variation>
    <variation>D</variation>
    <location>
        <position position="148"/>
    </location>
</feature>
<feature type="mutagenesis site" description="No effect on protein expression but loss of CD27 binding; when associated with A-115." evidence="6">
    <original>C</original>
    <variation>A</variation>
    <location>
        <position position="151"/>
    </location>
</feature>
<feature type="mutagenesis site" description="Decreased protein expression." evidence="6">
    <original>D</original>
    <variation>A</variation>
    <location>
        <position position="165"/>
    </location>
</feature>
<feature type="mutagenesis site" description="Loss of protein expression; when associated with A-133." evidence="6">
    <original>C</original>
    <variation>A</variation>
    <location>
        <position position="168"/>
    </location>
</feature>
<feature type="mutagenesis site" description="Decreased expression and decreased binding to CD27." evidence="6">
    <original>N</original>
    <variation>Q</variation>
    <location>
        <position position="170"/>
    </location>
</feature>
<feature type="mutagenesis site" description="Decreased CD27 binding." evidence="6">
    <original>S</original>
    <variation>A</variation>
    <location>
        <position position="178"/>
    </location>
</feature>
<feature type="mutagenesis site" description="Decreased CD27 binding." evidence="6">
    <original>N</original>
    <variation>R</variation>
    <variation>W</variation>
    <location>
        <position position="180"/>
    </location>
</feature>
<feature type="sequence conflict" description="In Ref. 1; AAA36175." evidence="12" ref="1">
    <original>A</original>
    <variation>V</variation>
    <location>
        <position position="154"/>
    </location>
</feature>
<feature type="strand" evidence="16">
    <location>
        <begin position="57"/>
        <end position="65"/>
    </location>
</feature>
<feature type="strand" evidence="16">
    <location>
        <begin position="72"/>
        <end position="76"/>
    </location>
</feature>
<feature type="turn" evidence="16">
    <location>
        <begin position="79"/>
        <end position="81"/>
    </location>
</feature>
<feature type="strand" evidence="16">
    <location>
        <begin position="85"/>
        <end position="88"/>
    </location>
</feature>
<feature type="strand" evidence="16">
    <location>
        <begin position="90"/>
        <end position="92"/>
    </location>
</feature>
<feature type="strand" evidence="16">
    <location>
        <begin position="95"/>
        <end position="97"/>
    </location>
</feature>
<feature type="strand" evidence="16">
    <location>
        <begin position="102"/>
        <end position="112"/>
    </location>
</feature>
<feature type="helix" evidence="16">
    <location>
        <begin position="117"/>
        <end position="122"/>
    </location>
</feature>
<feature type="strand" evidence="16">
    <location>
        <begin position="127"/>
        <end position="132"/>
    </location>
</feature>
<feature type="strand" evidence="16">
    <location>
        <begin position="134"/>
        <end position="136"/>
    </location>
</feature>
<feature type="strand" evidence="16">
    <location>
        <begin position="141"/>
        <end position="146"/>
    </location>
</feature>
<feature type="strand" evidence="16">
    <location>
        <begin position="151"/>
        <end position="161"/>
    </location>
</feature>
<feature type="strand" evidence="16">
    <location>
        <begin position="166"/>
        <end position="174"/>
    </location>
</feature>
<feature type="turn" evidence="16">
    <location>
        <begin position="181"/>
        <end position="183"/>
    </location>
</feature>
<feature type="strand" evidence="16">
    <location>
        <begin position="185"/>
        <end position="192"/>
    </location>
</feature>